<comment type="function">
    <text evidence="1">Binds the 23S rRNA.</text>
</comment>
<comment type="subunit">
    <text>Part of the 50S ribosomal subunit.</text>
</comment>
<comment type="subcellular location">
    <subcellularLocation>
        <location>Plastid</location>
        <location>Chloroplast</location>
    </subcellularLocation>
</comment>
<comment type="similarity">
    <text evidence="3">Belongs to the bacterial ribosomal protein bL31 family. Type A subfamily.</text>
</comment>
<sequence length="144" mass="16033">MAVSLPNSFLQISPCVPSLQLRKPVMAAVKGGKQSVRRSSNTVVQITCRKKELHPEFHEDAKVYCNGELVMTTGGTKKEYVVDVWSGNHPFYLGNRSALMVDADQVEKFRKRFAGLSEIMEIPVLKGEIIMPTKKSKGPKGKKK</sequence>
<organism>
    <name type="scientific">Arabidopsis thaliana</name>
    <name type="common">Mouse-ear cress</name>
    <dbReference type="NCBI Taxonomy" id="3702"/>
    <lineage>
        <taxon>Eukaryota</taxon>
        <taxon>Viridiplantae</taxon>
        <taxon>Streptophyta</taxon>
        <taxon>Embryophyta</taxon>
        <taxon>Tracheophyta</taxon>
        <taxon>Spermatophyta</taxon>
        <taxon>Magnoliopsida</taxon>
        <taxon>eudicotyledons</taxon>
        <taxon>Gunneridae</taxon>
        <taxon>Pentapetalae</taxon>
        <taxon>rosids</taxon>
        <taxon>malvids</taxon>
        <taxon>Brassicales</taxon>
        <taxon>Brassicaceae</taxon>
        <taxon>Camelineae</taxon>
        <taxon>Arabidopsis</taxon>
    </lineage>
</organism>
<gene>
    <name type="primary">RPL31</name>
    <name type="synonym">EMB2184</name>
    <name type="ordered locus">At1g75350</name>
    <name type="ORF">F1B16.11</name>
</gene>
<accession>Q9FWS4</accession>
<protein>
    <recommendedName>
        <fullName evidence="2">Large ribosomal subunit protein bL31c</fullName>
    </recommendedName>
    <alternativeName>
        <fullName>50S ribosomal protein L31, chloroplastic</fullName>
    </alternativeName>
    <alternativeName>
        <fullName>CL31</fullName>
    </alternativeName>
    <alternativeName>
        <fullName>Protein EMBRYO DEFECTIVE 2184</fullName>
    </alternativeName>
</protein>
<dbReference type="EMBL" id="AC023754">
    <property type="protein sequence ID" value="AAG13073.1"/>
    <property type="molecule type" value="Genomic_DNA"/>
</dbReference>
<dbReference type="EMBL" id="CP002684">
    <property type="protein sequence ID" value="AEE35705.1"/>
    <property type="molecule type" value="Genomic_DNA"/>
</dbReference>
<dbReference type="EMBL" id="AY059118">
    <property type="protein sequence ID" value="AAL15224.1"/>
    <property type="molecule type" value="mRNA"/>
</dbReference>
<dbReference type="EMBL" id="AF370226">
    <property type="protein sequence ID" value="AAK44041.1"/>
    <property type="molecule type" value="mRNA"/>
</dbReference>
<dbReference type="EMBL" id="AY087711">
    <property type="protein sequence ID" value="AAM65248.1"/>
    <property type="molecule type" value="mRNA"/>
</dbReference>
<dbReference type="PIR" id="A96784">
    <property type="entry name" value="A96784"/>
</dbReference>
<dbReference type="RefSeq" id="NP_565109.1">
    <property type="nucleotide sequence ID" value="NM_106189.4"/>
</dbReference>
<dbReference type="SMR" id="Q9FWS4"/>
<dbReference type="BioGRID" id="29090">
    <property type="interactions" value="1"/>
</dbReference>
<dbReference type="FunCoup" id="Q9FWS4">
    <property type="interactions" value="1372"/>
</dbReference>
<dbReference type="STRING" id="3702.Q9FWS4"/>
<dbReference type="MetOSite" id="Q9FWS4"/>
<dbReference type="PaxDb" id="3702-AT1G75350.1"/>
<dbReference type="ProteomicsDB" id="234709"/>
<dbReference type="EnsemblPlants" id="AT1G75350.1">
    <property type="protein sequence ID" value="AT1G75350.1"/>
    <property type="gene ID" value="AT1G75350"/>
</dbReference>
<dbReference type="GeneID" id="843871"/>
<dbReference type="Gramene" id="AT1G75350.1">
    <property type="protein sequence ID" value="AT1G75350.1"/>
    <property type="gene ID" value="AT1G75350"/>
</dbReference>
<dbReference type="KEGG" id="ath:AT1G75350"/>
<dbReference type="Araport" id="AT1G75350"/>
<dbReference type="TAIR" id="AT1G75350">
    <property type="gene designation" value="EMB2184"/>
</dbReference>
<dbReference type="eggNOG" id="ENOG502S4BF">
    <property type="taxonomic scope" value="Eukaryota"/>
</dbReference>
<dbReference type="HOGENOM" id="CLU_114306_0_1_1"/>
<dbReference type="InParanoid" id="Q9FWS4"/>
<dbReference type="OMA" id="VYCNGEH"/>
<dbReference type="OrthoDB" id="793at2759"/>
<dbReference type="PhylomeDB" id="Q9FWS4"/>
<dbReference type="PRO" id="PR:Q9FWS4"/>
<dbReference type="Proteomes" id="UP000006548">
    <property type="component" value="Chromosome 1"/>
</dbReference>
<dbReference type="ExpressionAtlas" id="Q9FWS4">
    <property type="expression patterns" value="baseline and differential"/>
</dbReference>
<dbReference type="GO" id="GO:0009507">
    <property type="term" value="C:chloroplast"/>
    <property type="evidence" value="ECO:0007005"/>
    <property type="project" value="TAIR"/>
</dbReference>
<dbReference type="GO" id="GO:0009941">
    <property type="term" value="C:chloroplast envelope"/>
    <property type="evidence" value="ECO:0007005"/>
    <property type="project" value="TAIR"/>
</dbReference>
<dbReference type="GO" id="GO:0009570">
    <property type="term" value="C:chloroplast stroma"/>
    <property type="evidence" value="ECO:0007005"/>
    <property type="project" value="TAIR"/>
</dbReference>
<dbReference type="GO" id="GO:0005739">
    <property type="term" value="C:mitochondrion"/>
    <property type="evidence" value="ECO:0007005"/>
    <property type="project" value="TAIR"/>
</dbReference>
<dbReference type="GO" id="GO:1990904">
    <property type="term" value="C:ribonucleoprotein complex"/>
    <property type="evidence" value="ECO:0007669"/>
    <property type="project" value="UniProtKB-KW"/>
</dbReference>
<dbReference type="GO" id="GO:0005840">
    <property type="term" value="C:ribosome"/>
    <property type="evidence" value="ECO:0007669"/>
    <property type="project" value="UniProtKB-KW"/>
</dbReference>
<dbReference type="GO" id="GO:0019843">
    <property type="term" value="F:rRNA binding"/>
    <property type="evidence" value="ECO:0007669"/>
    <property type="project" value="UniProtKB-KW"/>
</dbReference>
<dbReference type="GO" id="GO:0003735">
    <property type="term" value="F:structural constituent of ribosome"/>
    <property type="evidence" value="ECO:0007669"/>
    <property type="project" value="InterPro"/>
</dbReference>
<dbReference type="GO" id="GO:0006412">
    <property type="term" value="P:translation"/>
    <property type="evidence" value="ECO:0007669"/>
    <property type="project" value="InterPro"/>
</dbReference>
<dbReference type="Gene3D" id="4.10.830.30">
    <property type="entry name" value="Ribosomal protein L31"/>
    <property type="match status" value="1"/>
</dbReference>
<dbReference type="InterPro" id="IPR034704">
    <property type="entry name" value="Ribosomal_bL28/bL31-like_sf"/>
</dbReference>
<dbReference type="InterPro" id="IPR002150">
    <property type="entry name" value="Ribosomal_bL31"/>
</dbReference>
<dbReference type="InterPro" id="IPR042105">
    <property type="entry name" value="Ribosomal_bL31_sf"/>
</dbReference>
<dbReference type="NCBIfam" id="TIGR00105">
    <property type="entry name" value="L31"/>
    <property type="match status" value="1"/>
</dbReference>
<dbReference type="PANTHER" id="PTHR33280">
    <property type="entry name" value="50S RIBOSOMAL PROTEIN L31, CHLOROPLASTIC"/>
    <property type="match status" value="1"/>
</dbReference>
<dbReference type="PANTHER" id="PTHR33280:SF1">
    <property type="entry name" value="LARGE RIBOSOMAL SUBUNIT PROTEIN BL31C"/>
    <property type="match status" value="1"/>
</dbReference>
<dbReference type="Pfam" id="PF01197">
    <property type="entry name" value="Ribosomal_L31"/>
    <property type="match status" value="1"/>
</dbReference>
<dbReference type="PRINTS" id="PR01249">
    <property type="entry name" value="RIBOSOMALL31"/>
</dbReference>
<dbReference type="SUPFAM" id="SSF143800">
    <property type="entry name" value="L28p-like"/>
    <property type="match status" value="1"/>
</dbReference>
<reference key="1">
    <citation type="journal article" date="2000" name="Nature">
        <title>Sequence and analysis of chromosome 1 of the plant Arabidopsis thaliana.</title>
        <authorList>
            <person name="Theologis A."/>
            <person name="Ecker J.R."/>
            <person name="Palm C.J."/>
            <person name="Federspiel N.A."/>
            <person name="Kaul S."/>
            <person name="White O."/>
            <person name="Alonso J."/>
            <person name="Altafi H."/>
            <person name="Araujo R."/>
            <person name="Bowman C.L."/>
            <person name="Brooks S.Y."/>
            <person name="Buehler E."/>
            <person name="Chan A."/>
            <person name="Chao Q."/>
            <person name="Chen H."/>
            <person name="Cheuk R.F."/>
            <person name="Chin C.W."/>
            <person name="Chung M.K."/>
            <person name="Conn L."/>
            <person name="Conway A.B."/>
            <person name="Conway A.R."/>
            <person name="Creasy T.H."/>
            <person name="Dewar K."/>
            <person name="Dunn P."/>
            <person name="Etgu P."/>
            <person name="Feldblyum T.V."/>
            <person name="Feng J.-D."/>
            <person name="Fong B."/>
            <person name="Fujii C.Y."/>
            <person name="Gill J.E."/>
            <person name="Goldsmith A.D."/>
            <person name="Haas B."/>
            <person name="Hansen N.F."/>
            <person name="Hughes B."/>
            <person name="Huizar L."/>
            <person name="Hunter J.L."/>
            <person name="Jenkins J."/>
            <person name="Johnson-Hopson C."/>
            <person name="Khan S."/>
            <person name="Khaykin E."/>
            <person name="Kim C.J."/>
            <person name="Koo H.L."/>
            <person name="Kremenetskaia I."/>
            <person name="Kurtz D.B."/>
            <person name="Kwan A."/>
            <person name="Lam B."/>
            <person name="Langin-Hooper S."/>
            <person name="Lee A."/>
            <person name="Lee J.M."/>
            <person name="Lenz C.A."/>
            <person name="Li J.H."/>
            <person name="Li Y.-P."/>
            <person name="Lin X."/>
            <person name="Liu S.X."/>
            <person name="Liu Z.A."/>
            <person name="Luros J.S."/>
            <person name="Maiti R."/>
            <person name="Marziali A."/>
            <person name="Militscher J."/>
            <person name="Miranda M."/>
            <person name="Nguyen M."/>
            <person name="Nierman W.C."/>
            <person name="Osborne B.I."/>
            <person name="Pai G."/>
            <person name="Peterson J."/>
            <person name="Pham P.K."/>
            <person name="Rizzo M."/>
            <person name="Rooney T."/>
            <person name="Rowley D."/>
            <person name="Sakano H."/>
            <person name="Salzberg S.L."/>
            <person name="Schwartz J.R."/>
            <person name="Shinn P."/>
            <person name="Southwick A.M."/>
            <person name="Sun H."/>
            <person name="Tallon L.J."/>
            <person name="Tambunga G."/>
            <person name="Toriumi M.J."/>
            <person name="Town C.D."/>
            <person name="Utterback T."/>
            <person name="Van Aken S."/>
            <person name="Vaysberg M."/>
            <person name="Vysotskaia V.S."/>
            <person name="Walker M."/>
            <person name="Wu D."/>
            <person name="Yu G."/>
            <person name="Fraser C.M."/>
            <person name="Venter J.C."/>
            <person name="Davis R.W."/>
        </authorList>
    </citation>
    <scope>NUCLEOTIDE SEQUENCE [LARGE SCALE GENOMIC DNA]</scope>
    <source>
        <strain>cv. Columbia</strain>
    </source>
</reference>
<reference key="2">
    <citation type="journal article" date="2017" name="Plant J.">
        <title>Araport11: a complete reannotation of the Arabidopsis thaliana reference genome.</title>
        <authorList>
            <person name="Cheng C.Y."/>
            <person name="Krishnakumar V."/>
            <person name="Chan A.P."/>
            <person name="Thibaud-Nissen F."/>
            <person name="Schobel S."/>
            <person name="Town C.D."/>
        </authorList>
    </citation>
    <scope>GENOME REANNOTATION</scope>
    <source>
        <strain>cv. Columbia</strain>
    </source>
</reference>
<reference key="3">
    <citation type="journal article" date="2003" name="Science">
        <title>Empirical analysis of transcriptional activity in the Arabidopsis genome.</title>
        <authorList>
            <person name="Yamada K."/>
            <person name="Lim J."/>
            <person name="Dale J.M."/>
            <person name="Chen H."/>
            <person name="Shinn P."/>
            <person name="Palm C.J."/>
            <person name="Southwick A.M."/>
            <person name="Wu H.C."/>
            <person name="Kim C.J."/>
            <person name="Nguyen M."/>
            <person name="Pham P.K."/>
            <person name="Cheuk R.F."/>
            <person name="Karlin-Newmann G."/>
            <person name="Liu S.X."/>
            <person name="Lam B."/>
            <person name="Sakano H."/>
            <person name="Wu T."/>
            <person name="Yu G."/>
            <person name="Miranda M."/>
            <person name="Quach H.L."/>
            <person name="Tripp M."/>
            <person name="Chang C.H."/>
            <person name="Lee J.M."/>
            <person name="Toriumi M.J."/>
            <person name="Chan M.M."/>
            <person name="Tang C.C."/>
            <person name="Onodera C.S."/>
            <person name="Deng J.M."/>
            <person name="Akiyama K."/>
            <person name="Ansari Y."/>
            <person name="Arakawa T."/>
            <person name="Banh J."/>
            <person name="Banno F."/>
            <person name="Bowser L."/>
            <person name="Brooks S.Y."/>
            <person name="Carninci P."/>
            <person name="Chao Q."/>
            <person name="Choy N."/>
            <person name="Enju A."/>
            <person name="Goldsmith A.D."/>
            <person name="Gurjal M."/>
            <person name="Hansen N.F."/>
            <person name="Hayashizaki Y."/>
            <person name="Johnson-Hopson C."/>
            <person name="Hsuan V.W."/>
            <person name="Iida K."/>
            <person name="Karnes M."/>
            <person name="Khan S."/>
            <person name="Koesema E."/>
            <person name="Ishida J."/>
            <person name="Jiang P.X."/>
            <person name="Jones T."/>
            <person name="Kawai J."/>
            <person name="Kamiya A."/>
            <person name="Meyers C."/>
            <person name="Nakajima M."/>
            <person name="Narusaka M."/>
            <person name="Seki M."/>
            <person name="Sakurai T."/>
            <person name="Satou M."/>
            <person name="Tamse R."/>
            <person name="Vaysberg M."/>
            <person name="Wallender E.K."/>
            <person name="Wong C."/>
            <person name="Yamamura Y."/>
            <person name="Yuan S."/>
            <person name="Shinozaki K."/>
            <person name="Davis R.W."/>
            <person name="Theologis A."/>
            <person name="Ecker J.R."/>
        </authorList>
    </citation>
    <scope>NUCLEOTIDE SEQUENCE [LARGE SCALE MRNA]</scope>
    <source>
        <strain>cv. Columbia</strain>
    </source>
</reference>
<reference key="4">
    <citation type="submission" date="2002-03" db="EMBL/GenBank/DDBJ databases">
        <title>Full-length cDNA from Arabidopsis thaliana.</title>
        <authorList>
            <person name="Brover V.V."/>
            <person name="Troukhan M.E."/>
            <person name="Alexandrov N.A."/>
            <person name="Lu Y.-P."/>
            <person name="Flavell R.B."/>
            <person name="Feldmann K.A."/>
        </authorList>
    </citation>
    <scope>NUCLEOTIDE SEQUENCE [LARGE SCALE MRNA]</scope>
</reference>
<reference key="5">
    <citation type="journal article" date="2023" name="Plant Cell">
        <title>An updated nomenclature for plant ribosomal protein genes.</title>
        <authorList>
            <person name="Scarpin M.R."/>
            <person name="Busche M."/>
            <person name="Martinez R.E."/>
            <person name="Harper L.C."/>
            <person name="Reiser L."/>
            <person name="Szakonyi D."/>
            <person name="Merchante C."/>
            <person name="Lan T."/>
            <person name="Xiong W."/>
            <person name="Mo B."/>
            <person name="Tang G."/>
            <person name="Chen X."/>
            <person name="Bailey-Serres J."/>
            <person name="Browning K.S."/>
            <person name="Brunkard J.O."/>
        </authorList>
    </citation>
    <scope>NOMENCLATURE</scope>
</reference>
<keyword id="KW-0150">Chloroplast</keyword>
<keyword id="KW-0934">Plastid</keyword>
<keyword id="KW-1185">Reference proteome</keyword>
<keyword id="KW-0687">Ribonucleoprotein</keyword>
<keyword id="KW-0689">Ribosomal protein</keyword>
<keyword id="KW-0694">RNA-binding</keyword>
<keyword id="KW-0699">rRNA-binding</keyword>
<keyword id="KW-0809">Transit peptide</keyword>
<evidence type="ECO:0000250" key="1"/>
<evidence type="ECO:0000303" key="2">
    <source>
    </source>
</evidence>
<evidence type="ECO:0000305" key="3"/>
<proteinExistence type="evidence at transcript level"/>
<name>RK31_ARATH</name>
<feature type="transit peptide" description="Chloroplast" evidence="1">
    <location>
        <begin position="1"/>
        <end position="48"/>
    </location>
</feature>
<feature type="chain" id="PRO_0000249409" description="Large ribosomal subunit protein bL31c">
    <location>
        <begin position="49"/>
        <end position="144"/>
    </location>
</feature>